<proteinExistence type="evidence at protein level"/>
<name>URAA_ECOLI</name>
<organism>
    <name type="scientific">Escherichia coli (strain K12)</name>
    <dbReference type="NCBI Taxonomy" id="83333"/>
    <lineage>
        <taxon>Bacteria</taxon>
        <taxon>Pseudomonadati</taxon>
        <taxon>Pseudomonadota</taxon>
        <taxon>Gammaproteobacteria</taxon>
        <taxon>Enterobacterales</taxon>
        <taxon>Enterobacteriaceae</taxon>
        <taxon>Escherichia</taxon>
    </lineage>
</organism>
<feature type="chain" id="PRO_0000165958" description="Uracil permease">
    <location>
        <begin position="1"/>
        <end position="429"/>
    </location>
</feature>
<feature type="topological domain" description="Cytoplasmic" evidence="2">
    <location>
        <begin position="1"/>
        <end position="13"/>
    </location>
</feature>
<feature type="transmembrane region" description="Helical" evidence="2">
    <location>
        <begin position="14"/>
        <end position="37"/>
    </location>
</feature>
<feature type="topological domain" description="Periplasmic" evidence="2">
    <location>
        <begin position="38"/>
        <end position="41"/>
    </location>
</feature>
<feature type="transmembrane region" description="Helical" evidence="2">
    <location>
        <begin position="42"/>
        <end position="61"/>
    </location>
</feature>
<feature type="topological domain" description="Cytoplasmic" evidence="2">
    <location>
        <begin position="62"/>
        <end position="64"/>
    </location>
</feature>
<feature type="transmembrane region" description="Discontinuously helical" evidence="2">
    <location>
        <begin position="65"/>
        <end position="81"/>
    </location>
</feature>
<feature type="topological domain" description="Periplasmic" evidence="2">
    <location>
        <begin position="82"/>
        <end position="89"/>
    </location>
</feature>
<feature type="transmembrane region" description="Helical" evidence="2">
    <location>
        <begin position="90"/>
        <end position="110"/>
    </location>
</feature>
<feature type="topological domain" description="Cytoplasmic" evidence="2">
    <location>
        <begin position="111"/>
        <end position="122"/>
    </location>
</feature>
<feature type="transmembrane region" description="Helical" evidence="2">
    <location>
        <begin position="123"/>
        <end position="144"/>
    </location>
</feature>
<feature type="topological domain" description="Periplasmic" evidence="2">
    <location>
        <begin position="145"/>
        <end position="155"/>
    </location>
</feature>
<feature type="transmembrane region" description="Helical" evidence="2">
    <location>
        <begin position="156"/>
        <end position="171"/>
    </location>
</feature>
<feature type="topological domain" description="Cytoplasmic" evidence="2">
    <location>
        <begin position="172"/>
        <end position="178"/>
    </location>
</feature>
<feature type="transmembrane region" description="Helical" evidence="2">
    <location>
        <begin position="179"/>
        <end position="199"/>
    </location>
</feature>
<feature type="topological domain" description="Periplasmic" evidence="2">
    <location>
        <begin position="200"/>
        <end position="224"/>
    </location>
</feature>
<feature type="transmembrane region" description="Helical" evidence="2">
    <location>
        <begin position="225"/>
        <end position="248"/>
    </location>
</feature>
<feature type="topological domain" description="Cytoplasmic" evidence="2">
    <location>
        <begin position="249"/>
        <end position="261"/>
    </location>
</feature>
<feature type="transmembrane region" description="Helical" evidence="2">
    <location>
        <begin position="262"/>
        <end position="281"/>
    </location>
</feature>
<feature type="transmembrane region" description="Discontinuously helical" evidence="2">
    <location>
        <begin position="282"/>
        <end position="298"/>
    </location>
</feature>
<feature type="topological domain" description="Cytoplasmic" evidence="2">
    <location>
        <begin position="299"/>
        <end position="301"/>
    </location>
</feature>
<feature type="transmembrane region" description="Helical" evidence="2">
    <location>
        <begin position="302"/>
        <end position="319"/>
    </location>
</feature>
<feature type="topological domain" description="Periplasmic" evidence="2">
    <location>
        <begin position="320"/>
        <end position="332"/>
    </location>
</feature>
<feature type="transmembrane region" description="Helical" evidence="2">
    <location>
        <begin position="333"/>
        <end position="354"/>
    </location>
</feature>
<feature type="topological domain" description="Cytoplasmic" evidence="2">
    <location>
        <begin position="355"/>
        <end position="365"/>
    </location>
</feature>
<feature type="intramembrane region" description="Discontinuously helical" evidence="2">
    <location>
        <begin position="366"/>
        <end position="401"/>
    </location>
</feature>
<feature type="topological domain" description="Cytoplasmic" evidence="2">
    <location>
        <begin position="402"/>
        <end position="429"/>
    </location>
</feature>
<feature type="binding site" evidence="2">
    <location>
        <position position="73"/>
    </location>
    <ligand>
        <name>uracil</name>
        <dbReference type="ChEBI" id="CHEBI:17568"/>
    </ligand>
</feature>
<feature type="binding site" evidence="2">
    <location>
        <position position="241"/>
    </location>
    <ligand>
        <name>uracil</name>
        <dbReference type="ChEBI" id="CHEBI:17568"/>
    </ligand>
</feature>
<feature type="binding site" evidence="2">
    <location>
        <position position="289"/>
    </location>
    <ligand>
        <name>uracil</name>
        <dbReference type="ChEBI" id="CHEBI:17568"/>
    </ligand>
</feature>
<feature type="binding site" evidence="2">
    <location>
        <position position="290"/>
    </location>
    <ligand>
        <name>uracil</name>
        <dbReference type="ChEBI" id="CHEBI:17568"/>
    </ligand>
</feature>
<feature type="mutagenesis site" description="Slightly decreased uracil uptake." evidence="2">
    <original>F</original>
    <variation>A</variation>
    <location>
        <position position="73"/>
    </location>
</feature>
<feature type="mutagenesis site" description="Abolishes uracil uptake. Abolishes uracil binding." evidence="2">
    <original>E</original>
    <variation>A</variation>
    <location>
        <position position="241"/>
    </location>
</feature>
<feature type="mutagenesis site" description="Abolishes uracil uptake. Abolishes uracil binding." evidence="2">
    <original>H</original>
    <variation>A</variation>
    <location>
        <position position="245"/>
    </location>
</feature>
<feature type="mutagenesis site" description="No effect on uracil uptake." evidence="2">
    <original>Y</original>
    <variation>A</variation>
    <location>
        <position position="288"/>
    </location>
</feature>
<feature type="mutagenesis site" description="Abolishes uracil uptake. Abolishes uracil binding." evidence="2">
    <original>E</original>
    <variation>A</variation>
    <location>
        <position position="290"/>
    </location>
</feature>
<feature type="mutagenesis site" description="Slightly decreased uracil uptake." evidence="2">
    <original>N</original>
    <variation>A</variation>
    <location>
        <position position="291"/>
    </location>
</feature>
<feature type="mutagenesis site" description="Slightly decreased uracil uptake." evidence="2">
    <original>Y</original>
    <variation>A</variation>
    <location>
        <position position="342"/>
    </location>
</feature>
<feature type="helix" evidence="8">
    <location>
        <begin position="14"/>
        <end position="37"/>
    </location>
</feature>
<feature type="turn" evidence="8">
    <location>
        <begin position="38"/>
        <end position="40"/>
    </location>
</feature>
<feature type="helix" evidence="8">
    <location>
        <begin position="43"/>
        <end position="60"/>
    </location>
</feature>
<feature type="turn" evidence="8">
    <location>
        <begin position="61"/>
        <end position="63"/>
    </location>
</feature>
<feature type="strand" evidence="8">
    <location>
        <begin position="69"/>
        <end position="71"/>
    </location>
</feature>
<feature type="helix" evidence="8">
    <location>
        <begin position="73"/>
        <end position="75"/>
    </location>
</feature>
<feature type="helix" evidence="8">
    <location>
        <begin position="76"/>
        <end position="82"/>
    </location>
</feature>
<feature type="helix" evidence="8">
    <location>
        <begin position="83"/>
        <end position="85"/>
    </location>
</feature>
<feature type="helix" evidence="8">
    <location>
        <begin position="87"/>
        <end position="109"/>
    </location>
</feature>
<feature type="helix" evidence="8">
    <location>
        <begin position="114"/>
        <end position="119"/>
    </location>
</feature>
<feature type="helix" evidence="8">
    <location>
        <begin position="122"/>
        <end position="143"/>
    </location>
</feature>
<feature type="helix" evidence="8">
    <location>
        <begin position="156"/>
        <end position="174"/>
    </location>
</feature>
<feature type="strand" evidence="8">
    <location>
        <begin position="175"/>
        <end position="177"/>
    </location>
</feature>
<feature type="turn" evidence="8">
    <location>
        <begin position="178"/>
        <end position="182"/>
    </location>
</feature>
<feature type="helix" evidence="8">
    <location>
        <begin position="183"/>
        <end position="201"/>
    </location>
</feature>
<feature type="helix" evidence="8">
    <location>
        <begin position="206"/>
        <end position="209"/>
    </location>
</feature>
<feature type="helix" evidence="8">
    <location>
        <begin position="225"/>
        <end position="231"/>
    </location>
</feature>
<feature type="helix" evidence="8">
    <location>
        <begin position="233"/>
        <end position="253"/>
    </location>
</feature>
<feature type="helix" evidence="8">
    <location>
        <begin position="258"/>
        <end position="262"/>
    </location>
</feature>
<feature type="helix" evidence="8">
    <location>
        <begin position="263"/>
        <end position="280"/>
    </location>
</feature>
<feature type="strand" evidence="8">
    <location>
        <begin position="285"/>
        <end position="287"/>
    </location>
</feature>
<feature type="helix" evidence="8">
    <location>
        <begin position="289"/>
        <end position="298"/>
    </location>
</feature>
<feature type="helix" evidence="8">
    <location>
        <begin position="303"/>
        <end position="316"/>
    </location>
</feature>
<feature type="helix" evidence="8">
    <location>
        <begin position="320"/>
        <end position="326"/>
    </location>
</feature>
<feature type="helix" evidence="8">
    <location>
        <begin position="331"/>
        <end position="355"/>
    </location>
</feature>
<feature type="helix" evidence="8">
    <location>
        <begin position="363"/>
        <end position="378"/>
    </location>
</feature>
<feature type="strand" evidence="8">
    <location>
        <begin position="384"/>
        <end position="386"/>
    </location>
</feature>
<feature type="strand" evidence="9">
    <location>
        <begin position="387"/>
        <end position="390"/>
    </location>
</feature>
<feature type="helix" evidence="8">
    <location>
        <begin position="391"/>
        <end position="406"/>
    </location>
</feature>
<keyword id="KW-0002">3D-structure</keyword>
<keyword id="KW-0997">Cell inner membrane</keyword>
<keyword id="KW-1003">Cell membrane</keyword>
<keyword id="KW-0472">Membrane</keyword>
<keyword id="KW-1185">Reference proteome</keyword>
<keyword id="KW-0769">Symport</keyword>
<keyword id="KW-0812">Transmembrane</keyword>
<keyword id="KW-1133">Transmembrane helix</keyword>
<keyword id="KW-0813">Transport</keyword>
<accession>P0AGM7</accession>
<accession>P33780</accession>
<reference key="1">
    <citation type="journal article" date="1995" name="J. Bacteriol.">
        <title>Uracil uptake in Escherichia coli K-12: isolation of uraA mutants and cloning of the gene.</title>
        <authorList>
            <person name="Andersen P.S."/>
            <person name="Frees D."/>
            <person name="Fast R."/>
            <person name="Mygind B."/>
        </authorList>
    </citation>
    <scope>NUCLEOTIDE SEQUENCE [GENOMIC DNA]</scope>
    <scope>FUNCTION</scope>
    <scope>DISRUPTION PHENOTYPE</scope>
    <source>
        <strain>K12</strain>
    </source>
</reference>
<reference key="2">
    <citation type="journal article" date="1997" name="DNA Res.">
        <title>Construction of a contiguous 874-kb sequence of the Escherichia coli-K12 genome corresponding to 50.0-68.8 min on the linkage map and analysis of its sequence features.</title>
        <authorList>
            <person name="Yamamoto Y."/>
            <person name="Aiba H."/>
            <person name="Baba T."/>
            <person name="Hayashi K."/>
            <person name="Inada T."/>
            <person name="Isono K."/>
            <person name="Itoh T."/>
            <person name="Kimura S."/>
            <person name="Kitagawa M."/>
            <person name="Makino K."/>
            <person name="Miki T."/>
            <person name="Mitsuhashi N."/>
            <person name="Mizobuchi K."/>
            <person name="Mori H."/>
            <person name="Nakade S."/>
            <person name="Nakamura Y."/>
            <person name="Nashimoto H."/>
            <person name="Oshima T."/>
            <person name="Oyama S."/>
            <person name="Saito N."/>
            <person name="Sampei G."/>
            <person name="Satoh Y."/>
            <person name="Sivasundaram S."/>
            <person name="Tagami H."/>
            <person name="Takahashi H."/>
            <person name="Takeda J."/>
            <person name="Takemoto K."/>
            <person name="Uehara K."/>
            <person name="Wada C."/>
            <person name="Yamagata S."/>
            <person name="Horiuchi T."/>
        </authorList>
    </citation>
    <scope>NUCLEOTIDE SEQUENCE [LARGE SCALE GENOMIC DNA]</scope>
    <source>
        <strain>K12 / W3110 / ATCC 27325 / DSM 5911</strain>
    </source>
</reference>
<reference key="3">
    <citation type="journal article" date="1997" name="Science">
        <title>The complete genome sequence of Escherichia coli K-12.</title>
        <authorList>
            <person name="Blattner F.R."/>
            <person name="Plunkett G. III"/>
            <person name="Bloch C.A."/>
            <person name="Perna N.T."/>
            <person name="Burland V."/>
            <person name="Riley M."/>
            <person name="Collado-Vides J."/>
            <person name="Glasner J.D."/>
            <person name="Rode C.K."/>
            <person name="Mayhew G.F."/>
            <person name="Gregor J."/>
            <person name="Davis N.W."/>
            <person name="Kirkpatrick H.A."/>
            <person name="Goeden M.A."/>
            <person name="Rose D.J."/>
            <person name="Mau B."/>
            <person name="Shao Y."/>
        </authorList>
    </citation>
    <scope>NUCLEOTIDE SEQUENCE [LARGE SCALE GENOMIC DNA]</scope>
    <source>
        <strain>K12 / MG1655 / ATCC 47076</strain>
    </source>
</reference>
<reference key="4">
    <citation type="journal article" date="2006" name="Mol. Syst. Biol.">
        <title>Highly accurate genome sequences of Escherichia coli K-12 strains MG1655 and W3110.</title>
        <authorList>
            <person name="Hayashi K."/>
            <person name="Morooka N."/>
            <person name="Yamamoto Y."/>
            <person name="Fujita K."/>
            <person name="Isono K."/>
            <person name="Choi S."/>
            <person name="Ohtsubo E."/>
            <person name="Baba T."/>
            <person name="Wanner B.L."/>
            <person name="Mori H."/>
            <person name="Horiuchi T."/>
        </authorList>
    </citation>
    <scope>NUCLEOTIDE SEQUENCE [LARGE SCALE GENOMIC DNA]</scope>
    <source>
        <strain>K12 / W3110 / ATCC 27325 / DSM 5911</strain>
    </source>
</reference>
<reference key="5">
    <citation type="journal article" date="2005" name="Science">
        <title>Global topology analysis of the Escherichia coli inner membrane proteome.</title>
        <authorList>
            <person name="Daley D.O."/>
            <person name="Rapp M."/>
            <person name="Granseth E."/>
            <person name="Melen K."/>
            <person name="Drew D."/>
            <person name="von Heijne G."/>
        </authorList>
    </citation>
    <scope>SUBCELLULAR LOCATION</scope>
    <source>
        <strain>K12 / MG1655 / ATCC 47076</strain>
    </source>
</reference>
<reference evidence="7" key="6">
    <citation type="journal article" date="2011" name="Nature">
        <title>Structure and mechanism of the uracil transporter UraA.</title>
        <authorList>
            <person name="Lu F."/>
            <person name="Li S."/>
            <person name="Jiang Y."/>
            <person name="Jiang J."/>
            <person name="Fan H."/>
            <person name="Lu G."/>
            <person name="Deng D."/>
            <person name="Dang S."/>
            <person name="Zhang X."/>
            <person name="Wang J."/>
            <person name="Yan N."/>
        </authorList>
    </citation>
    <scope>X-RAY CRYSTALLOGRAPHY (2.78 ANGSTROMS) IN COMPLEX WITH URACIL</scope>
    <scope>FUNCTION</scope>
    <scope>CATALYTIC ACTIVITY</scope>
    <scope>SUBCELLULAR LOCATION</scope>
    <scope>TOPOLOGY</scope>
    <scope>MUTAGENESIS OF PHE-73; GLU-241; HIS-245; TYR-288; GLU-290; ASN-291 AND TYR-342</scope>
</reference>
<comment type="function">
    <text evidence="2 3">Transport of uracil in the cell.</text>
</comment>
<comment type="catalytic activity">
    <reaction evidence="2">
        <text>uracil(in) + H(+)(in) = uracil(out) + H(+)(out)</text>
        <dbReference type="Rhea" id="RHEA:29239"/>
        <dbReference type="ChEBI" id="CHEBI:15378"/>
        <dbReference type="ChEBI" id="CHEBI:17568"/>
    </reaction>
    <physiologicalReaction direction="right-to-left" evidence="2">
        <dbReference type="Rhea" id="RHEA:29241"/>
    </physiologicalReaction>
</comment>
<comment type="subcellular location">
    <subcellularLocation>
        <location evidence="1 2">Cell inner membrane</location>
        <topology evidence="2">Multi-pass membrane protein</topology>
    </subcellularLocation>
</comment>
<comment type="disruption phenotype">
    <text evidence="3">Insertion mutant exhibits normal UPRTase activity and cytosine uptake, but defective uracil uptake.</text>
</comment>
<comment type="similarity">
    <text evidence="6">Belongs to the nucleobase:cation symporter-2 (NCS2) (TC 2.A.40) family.</text>
</comment>
<dbReference type="EMBL" id="X73586">
    <property type="protein sequence ID" value="CAA51992.1"/>
    <property type="molecule type" value="Genomic_DNA"/>
</dbReference>
<dbReference type="EMBL" id="U00096">
    <property type="protein sequence ID" value="AAC75550.1"/>
    <property type="molecule type" value="Genomic_DNA"/>
</dbReference>
<dbReference type="EMBL" id="AP009048">
    <property type="protein sequence ID" value="BAA16385.1"/>
    <property type="molecule type" value="Genomic_DNA"/>
</dbReference>
<dbReference type="PIR" id="A56265">
    <property type="entry name" value="A56265"/>
</dbReference>
<dbReference type="RefSeq" id="NP_416992.1">
    <property type="nucleotide sequence ID" value="NC_000913.3"/>
</dbReference>
<dbReference type="RefSeq" id="WP_000198328.1">
    <property type="nucleotide sequence ID" value="NZ_STEB01000011.1"/>
</dbReference>
<dbReference type="PDB" id="3QE7">
    <property type="method" value="X-ray"/>
    <property type="resolution" value="2.78 A"/>
    <property type="chains" value="A=1-429"/>
</dbReference>
<dbReference type="PDB" id="8OMZ">
    <property type="method" value="X-ray"/>
    <property type="resolution" value="3.50 A"/>
    <property type="chains" value="A/C=2-429"/>
</dbReference>
<dbReference type="PDB" id="8OO1">
    <property type="method" value="X-ray"/>
    <property type="resolution" value="3.70 A"/>
    <property type="chains" value="A/C=2-429"/>
</dbReference>
<dbReference type="PDBsum" id="3QE7"/>
<dbReference type="PDBsum" id="8OMZ"/>
<dbReference type="PDBsum" id="8OO1"/>
<dbReference type="SMR" id="P0AGM7"/>
<dbReference type="BioGRID" id="4261437">
    <property type="interactions" value="11"/>
</dbReference>
<dbReference type="DIP" id="DIP-11094N"/>
<dbReference type="FunCoup" id="P0AGM7">
    <property type="interactions" value="152"/>
</dbReference>
<dbReference type="IntAct" id="P0AGM7">
    <property type="interactions" value="1"/>
</dbReference>
<dbReference type="STRING" id="511145.b2497"/>
<dbReference type="TCDB" id="2.A.40.1.1">
    <property type="family name" value="the nucleobase/ascorbate transporter (nat) or nucleobase:cation symporter-2 (ncs2) family"/>
</dbReference>
<dbReference type="PaxDb" id="511145-b2497"/>
<dbReference type="DNASU" id="946978"/>
<dbReference type="EnsemblBacteria" id="AAC75550">
    <property type="protein sequence ID" value="AAC75550"/>
    <property type="gene ID" value="b2497"/>
</dbReference>
<dbReference type="GeneID" id="93774639"/>
<dbReference type="GeneID" id="946978"/>
<dbReference type="KEGG" id="ecj:JW2482"/>
<dbReference type="KEGG" id="eco:b2497"/>
<dbReference type="KEGG" id="ecoc:C3026_13850"/>
<dbReference type="PATRIC" id="fig|1411691.4.peg.4242"/>
<dbReference type="EchoBASE" id="EB2050"/>
<dbReference type="eggNOG" id="COG2233">
    <property type="taxonomic scope" value="Bacteria"/>
</dbReference>
<dbReference type="HOGENOM" id="CLU_017959_1_2_6"/>
<dbReference type="InParanoid" id="P0AGM7"/>
<dbReference type="OMA" id="FMEHIGD"/>
<dbReference type="OrthoDB" id="9779092at2"/>
<dbReference type="PhylomeDB" id="P0AGM7"/>
<dbReference type="BioCyc" id="EcoCyc:URAA-MONOMER"/>
<dbReference type="BioCyc" id="MetaCyc:URAA-MONOMER"/>
<dbReference type="EvolutionaryTrace" id="P0AGM7"/>
<dbReference type="PRO" id="PR:P0AGM7"/>
<dbReference type="Proteomes" id="UP000000625">
    <property type="component" value="Chromosome"/>
</dbReference>
<dbReference type="GO" id="GO:0016020">
    <property type="term" value="C:membrane"/>
    <property type="evidence" value="ECO:0000314"/>
    <property type="project" value="UniProtKB"/>
</dbReference>
<dbReference type="GO" id="GO:0005886">
    <property type="term" value="C:plasma membrane"/>
    <property type="evidence" value="ECO:0000314"/>
    <property type="project" value="EcoCyc"/>
</dbReference>
<dbReference type="GO" id="GO:0042803">
    <property type="term" value="F:protein homodimerization activity"/>
    <property type="evidence" value="ECO:0000314"/>
    <property type="project" value="EcoCyc"/>
</dbReference>
<dbReference type="GO" id="GO:0015210">
    <property type="term" value="F:uracil transmembrane transporter activity"/>
    <property type="evidence" value="ECO:0000314"/>
    <property type="project" value="EcoCyc"/>
</dbReference>
<dbReference type="GO" id="GO:0015505">
    <property type="term" value="F:uracil:monoatomic cation symporter activity"/>
    <property type="evidence" value="ECO:0000314"/>
    <property type="project" value="EcoCyc"/>
</dbReference>
<dbReference type="GO" id="GO:0098721">
    <property type="term" value="P:uracil import across plasma membrane"/>
    <property type="evidence" value="ECO:0000314"/>
    <property type="project" value="EcoCyc"/>
</dbReference>
<dbReference type="GO" id="GO:0015857">
    <property type="term" value="P:uracil transport"/>
    <property type="evidence" value="ECO:0000314"/>
    <property type="project" value="UniProtKB"/>
</dbReference>
<dbReference type="InterPro" id="IPR006043">
    <property type="entry name" value="NCS2"/>
</dbReference>
<dbReference type="InterPro" id="IPR006042">
    <property type="entry name" value="Xan_ur_permease"/>
</dbReference>
<dbReference type="NCBIfam" id="TIGR00801">
    <property type="entry name" value="ncs2"/>
    <property type="match status" value="1"/>
</dbReference>
<dbReference type="NCBIfam" id="NF007995">
    <property type="entry name" value="PRK10720.1"/>
    <property type="match status" value="1"/>
</dbReference>
<dbReference type="PANTHER" id="PTHR42810">
    <property type="entry name" value="PURINE PERMEASE C1399.01C-RELATED"/>
    <property type="match status" value="1"/>
</dbReference>
<dbReference type="PANTHER" id="PTHR42810:SF4">
    <property type="entry name" value="URIC ACID TRANSPORTER UACT"/>
    <property type="match status" value="1"/>
</dbReference>
<dbReference type="Pfam" id="PF00860">
    <property type="entry name" value="Xan_ur_permease"/>
    <property type="match status" value="1"/>
</dbReference>
<dbReference type="PROSITE" id="PS01116">
    <property type="entry name" value="XANTH_URACIL_PERMASE"/>
    <property type="match status" value="1"/>
</dbReference>
<evidence type="ECO:0000269" key="1">
    <source>
    </source>
</evidence>
<evidence type="ECO:0000269" key="2">
    <source>
    </source>
</evidence>
<evidence type="ECO:0000269" key="3">
    <source>
    </source>
</evidence>
<evidence type="ECO:0000303" key="4">
    <source>
    </source>
</evidence>
<evidence type="ECO:0000303" key="5">
    <source>
    </source>
</evidence>
<evidence type="ECO:0000305" key="6"/>
<evidence type="ECO:0007744" key="7">
    <source>
        <dbReference type="PDB" id="3QE7"/>
    </source>
</evidence>
<evidence type="ECO:0007829" key="8">
    <source>
        <dbReference type="PDB" id="3QE7"/>
    </source>
</evidence>
<evidence type="ECO:0007829" key="9">
    <source>
        <dbReference type="PDB" id="8OMZ"/>
    </source>
</evidence>
<sequence>MTRRAIGVSERPPLLQTIPLSLQHLFAMFGATVLVPVLFHINPATVLLFNGIGTLLYLFICKGKIPAYLGSSFAFISPVLLLLPLGYEVALGGFIMCGVLFCLVSFIVKKAGTGWLDVLFPPAAMGAIVAVIGLELAGVAAGMAGLLPAEGQTPDSKTIIISITTLAVTVLGSVLFRGFLAIIPILIGVLVGYALSFAMGIVDTTPIINAHWFALPTLYTPRFEWFAILTILPAALVVIAEHVGHLVVTANIVKKDLLRDPGLHRSMFANGLSTVISGFFGSTPNTTYGENIGVMAITRVYSTWVIGGAAIFAILLSCVGKLAAAIQMIPLPVMGGVSLLLYGVIGASGIRVLIESKVDYNKAQNLILTSVILIIGVSGAKVNIGAAELKGMALATIVGIGLSLIFKLISVLRPEEVVLDAEDADITDK</sequence>
<gene>
    <name evidence="5" type="primary">uraA</name>
    <name type="ordered locus">b2497</name>
    <name type="ordered locus">JW2482</name>
</gene>
<protein>
    <recommendedName>
        <fullName evidence="6">Uracil permease</fullName>
    </recommendedName>
    <alternativeName>
        <fullName evidence="5">Uracil transporter</fullName>
    </alternativeName>
    <alternativeName>
        <fullName evidence="4">Uracil/H(+) symporter UraA</fullName>
    </alternativeName>
</protein>